<name>CAV3_RAT</name>
<dbReference type="EMBL" id="U31968">
    <property type="protein sequence ID" value="AAC52377.1"/>
    <property type="molecule type" value="mRNA"/>
</dbReference>
<dbReference type="EMBL" id="BC084692">
    <property type="protein sequence ID" value="AAH84692.1"/>
    <property type="molecule type" value="mRNA"/>
</dbReference>
<dbReference type="RefSeq" id="NP_062028.1">
    <property type="nucleotide sequence ID" value="NM_019155.2"/>
</dbReference>
<dbReference type="SMR" id="P51638"/>
<dbReference type="BioGRID" id="247843">
    <property type="interactions" value="4"/>
</dbReference>
<dbReference type="CORUM" id="P51638"/>
<dbReference type="FunCoup" id="P51638">
    <property type="interactions" value="402"/>
</dbReference>
<dbReference type="IntAct" id="P51638">
    <property type="interactions" value="1"/>
</dbReference>
<dbReference type="MINT" id="P51638"/>
<dbReference type="STRING" id="10116.ENSRNOP00000007601"/>
<dbReference type="iPTMnet" id="P51638"/>
<dbReference type="PhosphoSitePlus" id="P51638"/>
<dbReference type="SwissPalm" id="P51638"/>
<dbReference type="PaxDb" id="10116-ENSRNOP00000007601"/>
<dbReference type="Ensembl" id="ENSRNOT00000007601.5">
    <property type="protein sequence ID" value="ENSRNOP00000007601.4"/>
    <property type="gene ID" value="ENSRNOG00000005798.5"/>
</dbReference>
<dbReference type="GeneID" id="29161"/>
<dbReference type="KEGG" id="rno:29161"/>
<dbReference type="UCSC" id="RGD:2281">
    <property type="organism name" value="rat"/>
</dbReference>
<dbReference type="AGR" id="RGD:2281"/>
<dbReference type="CTD" id="859"/>
<dbReference type="RGD" id="2281">
    <property type="gene designation" value="Cav3"/>
</dbReference>
<dbReference type="eggNOG" id="ENOG502RYU9">
    <property type="taxonomic scope" value="Eukaryota"/>
</dbReference>
<dbReference type="GeneTree" id="ENSGT00950000183006"/>
<dbReference type="HOGENOM" id="CLU_102582_0_0_1"/>
<dbReference type="InParanoid" id="P51638"/>
<dbReference type="OMA" id="MCSSIKV"/>
<dbReference type="OrthoDB" id="5917823at2759"/>
<dbReference type="PhylomeDB" id="P51638"/>
<dbReference type="TreeFam" id="TF315736"/>
<dbReference type="PRO" id="PR:P51638"/>
<dbReference type="Proteomes" id="UP000002494">
    <property type="component" value="Chromosome 4"/>
</dbReference>
<dbReference type="Bgee" id="ENSRNOG00000005798">
    <property type="expression patterns" value="Expressed in quadriceps femoris and 11 other cell types or tissues"/>
</dbReference>
<dbReference type="GO" id="GO:0005901">
    <property type="term" value="C:caveola"/>
    <property type="evidence" value="ECO:0000314"/>
    <property type="project" value="BHF-UCL"/>
</dbReference>
<dbReference type="GO" id="GO:0009986">
    <property type="term" value="C:cell surface"/>
    <property type="evidence" value="ECO:0000314"/>
    <property type="project" value="RGD"/>
</dbReference>
<dbReference type="GO" id="GO:0016010">
    <property type="term" value="C:dystrophin-associated glycoprotein complex"/>
    <property type="evidence" value="ECO:0000266"/>
    <property type="project" value="RGD"/>
</dbReference>
<dbReference type="GO" id="GO:0005783">
    <property type="term" value="C:endoplasmic reticulum"/>
    <property type="evidence" value="ECO:0000266"/>
    <property type="project" value="RGD"/>
</dbReference>
<dbReference type="GO" id="GO:0000139">
    <property type="term" value="C:Golgi membrane"/>
    <property type="evidence" value="ECO:0007669"/>
    <property type="project" value="UniProtKB-SubCell"/>
</dbReference>
<dbReference type="GO" id="GO:0014704">
    <property type="term" value="C:intercalated disc"/>
    <property type="evidence" value="ECO:0000314"/>
    <property type="project" value="RGD"/>
</dbReference>
<dbReference type="GO" id="GO:0016020">
    <property type="term" value="C:membrane"/>
    <property type="evidence" value="ECO:0000266"/>
    <property type="project" value="RGD"/>
</dbReference>
<dbReference type="GO" id="GO:0045121">
    <property type="term" value="C:membrane raft"/>
    <property type="evidence" value="ECO:0000266"/>
    <property type="project" value="RGD"/>
</dbReference>
<dbReference type="GO" id="GO:0031594">
    <property type="term" value="C:neuromuscular junction"/>
    <property type="evidence" value="ECO:0000314"/>
    <property type="project" value="RGD"/>
</dbReference>
<dbReference type="GO" id="GO:0005886">
    <property type="term" value="C:plasma membrane"/>
    <property type="evidence" value="ECO:0000314"/>
    <property type="project" value="UniProtKB"/>
</dbReference>
<dbReference type="GO" id="GO:0032991">
    <property type="term" value="C:protein-containing complex"/>
    <property type="evidence" value="ECO:0000314"/>
    <property type="project" value="RGD"/>
</dbReference>
<dbReference type="GO" id="GO:0042383">
    <property type="term" value="C:sarcolemma"/>
    <property type="evidence" value="ECO:0000314"/>
    <property type="project" value="RGD"/>
</dbReference>
<dbReference type="GO" id="GO:0030315">
    <property type="term" value="C:T-tubule"/>
    <property type="evidence" value="ECO:0000314"/>
    <property type="project" value="MGI"/>
</dbReference>
<dbReference type="GO" id="GO:0031982">
    <property type="term" value="C:vesicle"/>
    <property type="evidence" value="ECO:0000314"/>
    <property type="project" value="BHF-UCL"/>
</dbReference>
<dbReference type="GO" id="GO:0030018">
    <property type="term" value="C:Z disc"/>
    <property type="evidence" value="ECO:0000314"/>
    <property type="project" value="RGD"/>
</dbReference>
<dbReference type="GO" id="GO:0043014">
    <property type="term" value="F:alpha-tubulin binding"/>
    <property type="evidence" value="ECO:0000266"/>
    <property type="project" value="RGD"/>
</dbReference>
<dbReference type="GO" id="GO:0005246">
    <property type="term" value="F:calcium channel regulator activity"/>
    <property type="evidence" value="ECO:0000266"/>
    <property type="project" value="RGD"/>
</dbReference>
<dbReference type="GO" id="GO:0071253">
    <property type="term" value="F:connexin binding"/>
    <property type="evidence" value="ECO:0000266"/>
    <property type="project" value="RGD"/>
</dbReference>
<dbReference type="GO" id="GO:0019899">
    <property type="term" value="F:enzyme binding"/>
    <property type="evidence" value="ECO:0000353"/>
    <property type="project" value="RGD"/>
</dbReference>
<dbReference type="GO" id="GO:0060090">
    <property type="term" value="F:molecular adaptor activity"/>
    <property type="evidence" value="ECO:0000314"/>
    <property type="project" value="RGD"/>
</dbReference>
<dbReference type="GO" id="GO:0050998">
    <property type="term" value="F:nitric-oxide synthase binding"/>
    <property type="evidence" value="ECO:0000353"/>
    <property type="project" value="RGD"/>
</dbReference>
<dbReference type="GO" id="GO:0019870">
    <property type="term" value="F:potassium channel inhibitor activity"/>
    <property type="evidence" value="ECO:0000315"/>
    <property type="project" value="BHF-UCL"/>
</dbReference>
<dbReference type="GO" id="GO:0044877">
    <property type="term" value="F:protein-containing complex binding"/>
    <property type="evidence" value="ECO:0000266"/>
    <property type="project" value="RGD"/>
</dbReference>
<dbReference type="GO" id="GO:0017080">
    <property type="term" value="F:sodium channel regulator activity"/>
    <property type="evidence" value="ECO:0000266"/>
    <property type="project" value="RGD"/>
</dbReference>
<dbReference type="GO" id="GO:0044325">
    <property type="term" value="F:transmembrane transporter binding"/>
    <property type="evidence" value="ECO:0000353"/>
    <property type="project" value="BHF-UCL"/>
</dbReference>
<dbReference type="GO" id="GO:0007015">
    <property type="term" value="P:actin filament organization"/>
    <property type="evidence" value="ECO:0000266"/>
    <property type="project" value="RGD"/>
</dbReference>
<dbReference type="GO" id="GO:0006816">
    <property type="term" value="P:calcium ion transport"/>
    <property type="evidence" value="ECO:0000266"/>
    <property type="project" value="RGD"/>
</dbReference>
<dbReference type="GO" id="GO:0055013">
    <property type="term" value="P:cardiac muscle cell development"/>
    <property type="evidence" value="ECO:0000266"/>
    <property type="project" value="RGD"/>
</dbReference>
<dbReference type="GO" id="GO:0003300">
    <property type="term" value="P:cardiac muscle hypertrophy"/>
    <property type="evidence" value="ECO:0000266"/>
    <property type="project" value="RGD"/>
</dbReference>
<dbReference type="GO" id="GO:0070836">
    <property type="term" value="P:caveola assembly"/>
    <property type="evidence" value="ECO:0000266"/>
    <property type="project" value="RGD"/>
</dbReference>
<dbReference type="GO" id="GO:0030154">
    <property type="term" value="P:cell differentiation"/>
    <property type="evidence" value="ECO:0000270"/>
    <property type="project" value="RGD"/>
</dbReference>
<dbReference type="GO" id="GO:1904637">
    <property type="term" value="P:cellular response to ionomycin"/>
    <property type="evidence" value="ECO:0000270"/>
    <property type="project" value="RGD"/>
</dbReference>
<dbReference type="GO" id="GO:0042632">
    <property type="term" value="P:cholesterol homeostasis"/>
    <property type="evidence" value="ECO:0000266"/>
    <property type="project" value="RGD"/>
</dbReference>
<dbReference type="GO" id="GO:0031122">
    <property type="term" value="P:cytoplasmic microtubule organization"/>
    <property type="evidence" value="ECO:0000266"/>
    <property type="project" value="RGD"/>
</dbReference>
<dbReference type="GO" id="GO:0035995">
    <property type="term" value="P:detection of muscle stretch"/>
    <property type="evidence" value="ECO:0000266"/>
    <property type="project" value="RGD"/>
</dbReference>
<dbReference type="GO" id="GO:0006897">
    <property type="term" value="P:endocytosis"/>
    <property type="evidence" value="ECO:0000266"/>
    <property type="project" value="RGD"/>
</dbReference>
<dbReference type="GO" id="GO:0051649">
    <property type="term" value="P:establishment of localization in cell"/>
    <property type="evidence" value="ECO:0000266"/>
    <property type="project" value="RGD"/>
</dbReference>
<dbReference type="GO" id="GO:0042593">
    <property type="term" value="P:glucose homeostasis"/>
    <property type="evidence" value="ECO:0000266"/>
    <property type="project" value="RGD"/>
</dbReference>
<dbReference type="GO" id="GO:0060347">
    <property type="term" value="P:heart trabecula formation"/>
    <property type="evidence" value="ECO:0000266"/>
    <property type="project" value="RGD"/>
</dbReference>
<dbReference type="GO" id="GO:0000165">
    <property type="term" value="P:MAPK cascade"/>
    <property type="evidence" value="ECO:0000266"/>
    <property type="project" value="RGD"/>
</dbReference>
<dbReference type="GO" id="GO:0031579">
    <property type="term" value="P:membrane raft organization"/>
    <property type="evidence" value="ECO:0000266"/>
    <property type="project" value="RGD"/>
</dbReference>
<dbReference type="GO" id="GO:0007520">
    <property type="term" value="P:myoblast fusion"/>
    <property type="evidence" value="ECO:0000266"/>
    <property type="project" value="RGD"/>
</dbReference>
<dbReference type="GO" id="GO:0014902">
    <property type="term" value="P:myotube differentiation"/>
    <property type="evidence" value="ECO:0000266"/>
    <property type="project" value="RGD"/>
</dbReference>
<dbReference type="GO" id="GO:0051926">
    <property type="term" value="P:negative regulation of calcium ion transport"/>
    <property type="evidence" value="ECO:0000266"/>
    <property type="project" value="RGD"/>
</dbReference>
<dbReference type="GO" id="GO:0010614">
    <property type="term" value="P:negative regulation of cardiac muscle hypertrophy"/>
    <property type="evidence" value="ECO:0000266"/>
    <property type="project" value="RGD"/>
</dbReference>
<dbReference type="GO" id="GO:0061052">
    <property type="term" value="P:negative regulation of cell growth involved in cardiac muscle cell development"/>
    <property type="evidence" value="ECO:0000315"/>
    <property type="project" value="RGD"/>
</dbReference>
<dbReference type="GO" id="GO:0045792">
    <property type="term" value="P:negative regulation of cell size"/>
    <property type="evidence" value="ECO:0000266"/>
    <property type="project" value="RGD"/>
</dbReference>
<dbReference type="GO" id="GO:0043409">
    <property type="term" value="P:negative regulation of MAPK cascade"/>
    <property type="evidence" value="ECO:0000266"/>
    <property type="project" value="RGD"/>
</dbReference>
<dbReference type="GO" id="GO:1900826">
    <property type="term" value="P:negative regulation of membrane depolarization during cardiac muscle cell action potential"/>
    <property type="evidence" value="ECO:0000266"/>
    <property type="project" value="RGD"/>
</dbReference>
<dbReference type="GO" id="GO:1901380">
    <property type="term" value="P:negative regulation of potassium ion transmembrane transport"/>
    <property type="evidence" value="ECO:0000315"/>
    <property type="project" value="BHF-UCL"/>
</dbReference>
<dbReference type="GO" id="GO:0060299">
    <property type="term" value="P:negative regulation of sarcomere organization"/>
    <property type="evidence" value="ECO:0000266"/>
    <property type="project" value="RGD"/>
</dbReference>
<dbReference type="GO" id="GO:0051647">
    <property type="term" value="P:nucleus localization"/>
    <property type="evidence" value="ECO:0000266"/>
    <property type="project" value="RGD"/>
</dbReference>
<dbReference type="GO" id="GO:0007009">
    <property type="term" value="P:plasma membrane organization"/>
    <property type="evidence" value="ECO:0000266"/>
    <property type="project" value="RGD"/>
</dbReference>
<dbReference type="GO" id="GO:0001778">
    <property type="term" value="P:plasma membrane repair"/>
    <property type="evidence" value="ECO:0000266"/>
    <property type="project" value="RGD"/>
</dbReference>
<dbReference type="GO" id="GO:2001288">
    <property type="term" value="P:positive regulation of caveolin-mediated endocytosis"/>
    <property type="evidence" value="ECO:0000315"/>
    <property type="project" value="BHF-UCL"/>
</dbReference>
<dbReference type="GO" id="GO:0008284">
    <property type="term" value="P:positive regulation of cell population proliferation"/>
    <property type="evidence" value="ECO:0000315"/>
    <property type="project" value="RGD"/>
</dbReference>
<dbReference type="GO" id="GO:0007204">
    <property type="term" value="P:positive regulation of cytosolic calcium ion concentration"/>
    <property type="evidence" value="ECO:0000315"/>
    <property type="project" value="RGD"/>
</dbReference>
<dbReference type="GO" id="GO:0031116">
    <property type="term" value="P:positive regulation of microtubule polymerization"/>
    <property type="evidence" value="ECO:0000315"/>
    <property type="project" value="RGD"/>
</dbReference>
<dbReference type="GO" id="GO:0010831">
    <property type="term" value="P:positive regulation of myotube differentiation"/>
    <property type="evidence" value="ECO:0000266"/>
    <property type="project" value="RGD"/>
</dbReference>
<dbReference type="GO" id="GO:0008104">
    <property type="term" value="P:protein localization"/>
    <property type="evidence" value="ECO:0000266"/>
    <property type="project" value="RGD"/>
</dbReference>
<dbReference type="GO" id="GO:0072659">
    <property type="term" value="P:protein localization to plasma membrane"/>
    <property type="evidence" value="ECO:0000266"/>
    <property type="project" value="RGD"/>
</dbReference>
<dbReference type="GO" id="GO:0060762">
    <property type="term" value="P:regulation of branching involved in mammary gland duct morphogenesis"/>
    <property type="evidence" value="ECO:0000266"/>
    <property type="project" value="RGD"/>
</dbReference>
<dbReference type="GO" id="GO:0090279">
    <property type="term" value="P:regulation of calcium ion import"/>
    <property type="evidence" value="ECO:0000266"/>
    <property type="project" value="RGD"/>
</dbReference>
<dbReference type="GO" id="GO:0051924">
    <property type="term" value="P:regulation of calcium ion transport"/>
    <property type="evidence" value="ECO:0000266"/>
    <property type="project" value="RGD"/>
</dbReference>
<dbReference type="GO" id="GO:0098909">
    <property type="term" value="P:regulation of cardiac muscle cell action potential involved in regulation of contraction"/>
    <property type="evidence" value="ECO:0000266"/>
    <property type="project" value="RGD"/>
</dbReference>
<dbReference type="GO" id="GO:0055117">
    <property type="term" value="P:regulation of cardiac muscle contraction"/>
    <property type="evidence" value="ECO:0000266"/>
    <property type="project" value="RGD"/>
</dbReference>
<dbReference type="GO" id="GO:0051480">
    <property type="term" value="P:regulation of cytosolic calcium ion concentration"/>
    <property type="evidence" value="ECO:0000318"/>
    <property type="project" value="GO_Central"/>
</dbReference>
<dbReference type="GO" id="GO:0008016">
    <property type="term" value="P:regulation of heart contraction"/>
    <property type="evidence" value="ECO:0000266"/>
    <property type="project" value="RGD"/>
</dbReference>
<dbReference type="GO" id="GO:0002027">
    <property type="term" value="P:regulation of heart rate"/>
    <property type="evidence" value="ECO:0000266"/>
    <property type="project" value="RGD"/>
</dbReference>
<dbReference type="GO" id="GO:1900825">
    <property type="term" value="P:regulation of membrane depolarization during cardiac muscle cell action potential"/>
    <property type="evidence" value="ECO:0000266"/>
    <property type="project" value="RGD"/>
</dbReference>
<dbReference type="GO" id="GO:0042391">
    <property type="term" value="P:regulation of membrane potential"/>
    <property type="evidence" value="ECO:0000266"/>
    <property type="project" value="RGD"/>
</dbReference>
<dbReference type="GO" id="GO:1900744">
    <property type="term" value="P:regulation of p38MAPK cascade"/>
    <property type="evidence" value="ECO:0000266"/>
    <property type="project" value="RGD"/>
</dbReference>
<dbReference type="GO" id="GO:0051896">
    <property type="term" value="P:regulation of phosphatidylinositol 3-kinase/protein kinase B signal transduction"/>
    <property type="evidence" value="ECO:0000266"/>
    <property type="project" value="RGD"/>
</dbReference>
<dbReference type="GO" id="GO:0038009">
    <property type="term" value="P:regulation of signal transduction by receptor internalization"/>
    <property type="evidence" value="ECO:0000266"/>
    <property type="project" value="RGD"/>
</dbReference>
<dbReference type="GO" id="GO:0014819">
    <property type="term" value="P:regulation of skeletal muscle contraction"/>
    <property type="evidence" value="ECO:0000266"/>
    <property type="project" value="RGD"/>
</dbReference>
<dbReference type="GO" id="GO:1902305">
    <property type="term" value="P:regulation of sodium ion transmembrane transport"/>
    <property type="evidence" value="ECO:0000266"/>
    <property type="project" value="RGD"/>
</dbReference>
<dbReference type="GO" id="GO:0017015">
    <property type="term" value="P:regulation of transforming growth factor beta receptor signaling pathway"/>
    <property type="evidence" value="ECO:0000266"/>
    <property type="project" value="RGD"/>
</dbReference>
<dbReference type="GO" id="GO:0060373">
    <property type="term" value="P:regulation of ventricular cardiac muscle cell membrane depolarization"/>
    <property type="evidence" value="ECO:0000266"/>
    <property type="project" value="RGD"/>
</dbReference>
<dbReference type="GO" id="GO:0060307">
    <property type="term" value="P:regulation of ventricular cardiac muscle cell membrane repolarization"/>
    <property type="evidence" value="ECO:0000266"/>
    <property type="project" value="RGD"/>
</dbReference>
<dbReference type="GO" id="GO:0001666">
    <property type="term" value="P:response to hypoxia"/>
    <property type="evidence" value="ECO:0000270"/>
    <property type="project" value="RGD"/>
</dbReference>
<dbReference type="GO" id="GO:0002931">
    <property type="term" value="P:response to ischemia"/>
    <property type="evidence" value="ECO:0000270"/>
    <property type="project" value="RGD"/>
</dbReference>
<dbReference type="GO" id="GO:0006641">
    <property type="term" value="P:triglyceride metabolic process"/>
    <property type="evidence" value="ECO:0000266"/>
    <property type="project" value="RGD"/>
</dbReference>
<dbReference type="GO" id="GO:0086005">
    <property type="term" value="P:ventricular cardiac muscle cell action potential"/>
    <property type="evidence" value="ECO:0000315"/>
    <property type="project" value="BHF-UCL"/>
</dbReference>
<dbReference type="InterPro" id="IPR001612">
    <property type="entry name" value="Caveolin"/>
</dbReference>
<dbReference type="InterPro" id="IPR018361">
    <property type="entry name" value="Caveolin_CS"/>
</dbReference>
<dbReference type="PANTHER" id="PTHR10844">
    <property type="entry name" value="CAVEOLIN"/>
    <property type="match status" value="1"/>
</dbReference>
<dbReference type="PANTHER" id="PTHR10844:SF16">
    <property type="entry name" value="CAVEOLIN-3"/>
    <property type="match status" value="1"/>
</dbReference>
<dbReference type="Pfam" id="PF01146">
    <property type="entry name" value="Caveolin"/>
    <property type="match status" value="1"/>
</dbReference>
<dbReference type="PROSITE" id="PS01210">
    <property type="entry name" value="CAVEOLIN"/>
    <property type="match status" value="1"/>
</dbReference>
<sequence>MMTEEHTDLEARIIKDIHCKEIDLVNRDPKNINEDIVKVDFEDVIAEPEGTYSFDGVWRVSYTTFTVSKYWCYRLLSTLLGVPLALLWGFLFACISFCHIWAVVPCIKSYLIEIQCISHIYSLCIRTFCNPLFAALGQVCSNIKVVLRREG</sequence>
<accession>P51638</accession>
<evidence type="ECO:0000250" key="1"/>
<evidence type="ECO:0000250" key="2">
    <source>
        <dbReference type="UniProtKB" id="P51637"/>
    </source>
</evidence>
<evidence type="ECO:0000250" key="3">
    <source>
        <dbReference type="UniProtKB" id="P56539"/>
    </source>
</evidence>
<evidence type="ECO:0000255" key="4"/>
<evidence type="ECO:0000269" key="5">
    <source>
    </source>
</evidence>
<evidence type="ECO:0000269" key="6">
    <source>
    </source>
</evidence>
<evidence type="ECO:0000269" key="7">
    <source>
    </source>
</evidence>
<evidence type="ECO:0000305" key="8"/>
<feature type="chain" id="PRO_0000144142" description="Caveolin-3">
    <location>
        <begin position="1"/>
        <end position="151"/>
    </location>
</feature>
<feature type="topological domain" description="Cytoplasmic" evidence="4">
    <location>
        <begin position="1"/>
        <end position="83"/>
    </location>
</feature>
<feature type="intramembrane region" description="Helical" evidence="4">
    <location>
        <begin position="84"/>
        <end position="104"/>
    </location>
</feature>
<feature type="topological domain" description="Cytoplasmic" evidence="4">
    <location>
        <begin position="105"/>
        <end position="151"/>
    </location>
</feature>
<feature type="cross-link" description="Glycyl lysine isopeptide (Lys-Gly) (interchain with G-Cter in SUMO3)" evidence="1">
    <location>
        <position position="38"/>
    </location>
</feature>
<comment type="function">
    <text evidence="2 3">May act as a scaffolding protein within caveolar membranes. Interacts directly with G-protein alpha subunits and can functionally regulate their activity. May also regulate voltage-gated potassium channels. Plays a role in the sarcolemma repair mechanism of both skeletal muscle and cardiomyocytes that permits rapid resealing of membranes disrupted by mechanical stress. Mediates the recruitment of CAVIN2 and CAVIN3 proteins to the caveolae.</text>
</comment>
<comment type="subunit">
    <text evidence="2 3 5">Homooligomer. Interacts with DYSF (By similarity). Interacts with DLG1 and KCNA5; forms a ternary complex (PubMed:15277200). Interacts with DAG1 (via its C-terminal); the interaction prevents binding of DAG1 with DMD. Interacts with TRIM72. Interacts with MUSK; may regulate MUSK signaling. Interacts with POPDC1. Interacts with CAVIN1, CAVIN2 and CAVIN4 (By similarity).</text>
</comment>
<comment type="subcellular location">
    <subcellularLocation>
        <location evidence="1">Golgi apparatus membrane</location>
        <topology evidence="1">Peripheral membrane protein</topology>
    </subcellularLocation>
    <subcellularLocation>
        <location evidence="6 7">Cell membrane</location>
        <topology evidence="1">Peripheral membrane protein</topology>
    </subcellularLocation>
    <subcellularLocation>
        <location evidence="2">Membrane</location>
        <location evidence="2">Caveola</location>
        <topology evidence="1">Peripheral membrane protein</topology>
    </subcellularLocation>
    <subcellularLocation>
        <location evidence="2">Cell membrane</location>
        <location evidence="2">Sarcolemma</location>
    </subcellularLocation>
    <text evidence="1">Potential hairpin-like structure in the membrane. Membrane protein of caveolae (By similarity).</text>
</comment>
<comment type="tissue specificity">
    <text>Expressed predominantly in muscle.</text>
</comment>
<comment type="PTM">
    <text evidence="1">Sumoylation with SUMO3 by PIAS4 may reduce agonist-induced internalization and desensitization of adrenergic receptor ABRD2.</text>
</comment>
<comment type="similarity">
    <text evidence="8">Belongs to the caveolin family.</text>
</comment>
<gene>
    <name type="primary">Cav3</name>
</gene>
<proteinExistence type="evidence at protein level"/>
<keyword id="KW-1003">Cell membrane</keyword>
<keyword id="KW-0333">Golgi apparatus</keyword>
<keyword id="KW-1017">Isopeptide bond</keyword>
<keyword id="KW-0472">Membrane</keyword>
<keyword id="KW-1185">Reference proteome</keyword>
<keyword id="KW-0832">Ubl conjugation</keyword>
<protein>
    <recommendedName>
        <fullName>Caveolin-3</fullName>
    </recommendedName>
</protein>
<reference key="1">
    <citation type="journal article" date="1996" name="J. Biol. Chem.">
        <title>Molecular cloning of caveolin-3, a novel member of the caveolin gene family expressed predominantly in muscle.</title>
        <authorList>
            <person name="Tang Z."/>
            <person name="Scherer P.E."/>
            <person name="Okamoto T."/>
            <person name="Song K."/>
            <person name="Chu K."/>
            <person name="Kohtz D.S."/>
            <person name="Nishimoto I."/>
            <person name="Lodish H.F."/>
            <person name="Lisanti M.P."/>
        </authorList>
    </citation>
    <scope>NUCLEOTIDE SEQUENCE [MRNA]</scope>
    <source>
        <tissue>Heart muscle</tissue>
    </source>
</reference>
<reference key="2">
    <citation type="journal article" date="2004" name="Genome Res.">
        <title>The status, quality, and expansion of the NIH full-length cDNA project: the Mammalian Gene Collection (MGC).</title>
        <authorList>
            <consortium name="The MGC Project Team"/>
        </authorList>
    </citation>
    <scope>NUCLEOTIDE SEQUENCE [LARGE SCALE MRNA]</scope>
    <source>
        <tissue>Heart</tissue>
    </source>
</reference>
<reference key="3">
    <citation type="journal article" date="2004" name="Am. J. Physiol.">
        <title>Caveolin-3 and SAP97 form a scaffolding protein complex that regulates the voltage-gated potassium channel Kv1.5.</title>
        <authorList>
            <person name="Folco E.J."/>
            <person name="Liu G.-X."/>
            <person name="Koren G."/>
        </authorList>
    </citation>
    <scope>INTERACTION WITH DLG1 AND KCNA5</scope>
</reference>
<reference key="4">
    <citation type="journal article" date="2014" name="Proc. Natl. Acad. Sci. U.S.A.">
        <title>MURC/Cavin-4 facilitates recruitment of ERK to caveolae and concentric cardiac hypertrophy induced by alpha1-adrenergic receptors.</title>
        <authorList>
            <person name="Ogata T."/>
            <person name="Naito D."/>
            <person name="Nakanishi N."/>
            <person name="Hayashi Y.K."/>
            <person name="Taniguchi T."/>
            <person name="Miyagawa K."/>
            <person name="Hamaoka T."/>
            <person name="Maruyama N."/>
            <person name="Matoba S."/>
            <person name="Ikeda K."/>
            <person name="Yamada H."/>
            <person name="Oh H."/>
            <person name="Ueyama T."/>
        </authorList>
    </citation>
    <scope>SUBCELLULAR LOCATION</scope>
</reference>
<reference key="5">
    <citation type="journal article" date="2015" name="Am. J. Physiol.">
        <title>The coiled-coil domain of MURC/cavin-4 is involved in membrane trafficking of caveolin-3 in cardiomyocytes.</title>
        <authorList>
            <person name="Naito D."/>
            <person name="Ogata T."/>
            <person name="Hamaoka T."/>
            <person name="Nakanishi N."/>
            <person name="Miyagawa K."/>
            <person name="Maruyama N."/>
            <person name="Kasahara T."/>
            <person name="Taniguchi T."/>
            <person name="Nishi M."/>
            <person name="Matoba S."/>
            <person name="Ueyama T."/>
        </authorList>
    </citation>
    <scope>SUBCELLULAR LOCATION</scope>
</reference>
<organism>
    <name type="scientific">Rattus norvegicus</name>
    <name type="common">Rat</name>
    <dbReference type="NCBI Taxonomy" id="10116"/>
    <lineage>
        <taxon>Eukaryota</taxon>
        <taxon>Metazoa</taxon>
        <taxon>Chordata</taxon>
        <taxon>Craniata</taxon>
        <taxon>Vertebrata</taxon>
        <taxon>Euteleostomi</taxon>
        <taxon>Mammalia</taxon>
        <taxon>Eutheria</taxon>
        <taxon>Euarchontoglires</taxon>
        <taxon>Glires</taxon>
        <taxon>Rodentia</taxon>
        <taxon>Myomorpha</taxon>
        <taxon>Muroidea</taxon>
        <taxon>Muridae</taxon>
        <taxon>Murinae</taxon>
        <taxon>Rattus</taxon>
    </lineage>
</organism>